<sequence>MFRVVHGDITRFKAEAIVNAANKYLEHGGGVAYAIAKAASGDVSEYIRISKEEMRKQIGRDWIEHGEVVVTPPLNLAKNGVKYVIHTVGPYCGGKWDEDKRKKLELAILGALKKADELGVRSIAFPAISAGIYGCPLEEVVKTFKLVVNEFLKSAKNVTDVYLVLYSERDYEVALKVLERDEL</sequence>
<comment type="sequence caution" evidence="2">
    <conflict type="erroneous initiation">
        <sequence resource="EMBL-CDS" id="CAB49569"/>
    </conflict>
    <text>Extended N-terminus.</text>
</comment>
<dbReference type="EMBL" id="AJ248285">
    <property type="protein sequence ID" value="CAB49569.1"/>
    <property type="status" value="ALT_INIT"/>
    <property type="molecule type" value="Genomic_DNA"/>
</dbReference>
<dbReference type="EMBL" id="HE613800">
    <property type="protein sequence ID" value="CCE70041.1"/>
    <property type="molecule type" value="Genomic_DNA"/>
</dbReference>
<dbReference type="PIR" id="H75106">
    <property type="entry name" value="H75106"/>
</dbReference>
<dbReference type="RefSeq" id="WP_048146596.1">
    <property type="nucleotide sequence ID" value="NC_000868.1"/>
</dbReference>
<dbReference type="SMR" id="Q9V0Y3"/>
<dbReference type="STRING" id="272844.PAB0445"/>
<dbReference type="KEGG" id="pab:PAB0445"/>
<dbReference type="PATRIC" id="fig|272844.11.peg.687"/>
<dbReference type="eggNOG" id="arCOG04225">
    <property type="taxonomic scope" value="Archaea"/>
</dbReference>
<dbReference type="HOGENOM" id="CLU_046550_7_0_2"/>
<dbReference type="OrthoDB" id="15450at2157"/>
<dbReference type="Proteomes" id="UP000000810">
    <property type="component" value="Chromosome"/>
</dbReference>
<dbReference type="Proteomes" id="UP000009139">
    <property type="component" value="Chromosome"/>
</dbReference>
<dbReference type="Gene3D" id="3.40.220.10">
    <property type="entry name" value="Leucine Aminopeptidase, subunit E, domain 1"/>
    <property type="match status" value="1"/>
</dbReference>
<dbReference type="InterPro" id="IPR002589">
    <property type="entry name" value="Macro_dom"/>
</dbReference>
<dbReference type="InterPro" id="IPR043472">
    <property type="entry name" value="Macro_dom-like"/>
</dbReference>
<dbReference type="NCBIfam" id="NF001662">
    <property type="entry name" value="PRK00431.1-3"/>
    <property type="match status" value="1"/>
</dbReference>
<dbReference type="PANTHER" id="PTHR11106">
    <property type="entry name" value="GANGLIOSIDE INDUCED DIFFERENTIATION ASSOCIATED PROTEIN 2-RELATED"/>
    <property type="match status" value="1"/>
</dbReference>
<dbReference type="PANTHER" id="PTHR11106:SF27">
    <property type="entry name" value="MACRO DOMAIN-CONTAINING PROTEIN"/>
    <property type="match status" value="1"/>
</dbReference>
<dbReference type="Pfam" id="PF01661">
    <property type="entry name" value="Macro"/>
    <property type="match status" value="1"/>
</dbReference>
<dbReference type="SMART" id="SM00506">
    <property type="entry name" value="A1pp"/>
    <property type="match status" value="1"/>
</dbReference>
<dbReference type="SUPFAM" id="SSF52949">
    <property type="entry name" value="Macro domain-like"/>
    <property type="match status" value="1"/>
</dbReference>
<dbReference type="PROSITE" id="PS51154">
    <property type="entry name" value="MACRO"/>
    <property type="match status" value="1"/>
</dbReference>
<proteinExistence type="predicted"/>
<accession>Q9V0Y3</accession>
<accession>G8ZJB4</accession>
<name>Y656_PYRAB</name>
<organism>
    <name type="scientific">Pyrococcus abyssi (strain GE5 / Orsay)</name>
    <dbReference type="NCBI Taxonomy" id="272844"/>
    <lineage>
        <taxon>Archaea</taxon>
        <taxon>Methanobacteriati</taxon>
        <taxon>Methanobacteriota</taxon>
        <taxon>Thermococci</taxon>
        <taxon>Thermococcales</taxon>
        <taxon>Thermococcaceae</taxon>
        <taxon>Pyrococcus</taxon>
    </lineage>
</organism>
<gene>
    <name type="ordered locus">PYRAB06560</name>
    <name type="ORF">PAB0445</name>
</gene>
<reference key="1">
    <citation type="journal article" date="2003" name="Mol. Microbiol.">
        <title>An integrated analysis of the genome of the hyperthermophilic archaeon Pyrococcus abyssi.</title>
        <authorList>
            <person name="Cohen G.N."/>
            <person name="Barbe V."/>
            <person name="Flament D."/>
            <person name="Galperin M."/>
            <person name="Heilig R."/>
            <person name="Lecompte O."/>
            <person name="Poch O."/>
            <person name="Prieur D."/>
            <person name="Querellou J."/>
            <person name="Ripp R."/>
            <person name="Thierry J.-C."/>
            <person name="Van der Oost J."/>
            <person name="Weissenbach J."/>
            <person name="Zivanovic Y."/>
            <person name="Forterre P."/>
        </authorList>
    </citation>
    <scope>NUCLEOTIDE SEQUENCE [LARGE SCALE GENOMIC DNA]</scope>
    <source>
        <strain>GE5 / Orsay</strain>
    </source>
</reference>
<reference key="2">
    <citation type="journal article" date="2012" name="Curr. Microbiol.">
        <title>Re-annotation of two hyperthermophilic archaea Pyrococcus abyssi GE5 and Pyrococcus furiosus DSM 3638.</title>
        <authorList>
            <person name="Gao J."/>
            <person name="Wang J."/>
        </authorList>
    </citation>
    <scope>GENOME REANNOTATION</scope>
    <source>
        <strain>GE5 / Orsay</strain>
    </source>
</reference>
<protein>
    <recommendedName>
        <fullName>Uncharacterized protein PYRAB06560</fullName>
    </recommendedName>
</protein>
<feature type="chain" id="PRO_0000089231" description="Uncharacterized protein PYRAB06560">
    <location>
        <begin position="1"/>
        <end position="183"/>
    </location>
</feature>
<feature type="domain" description="Macro" evidence="1">
    <location>
        <begin position="1"/>
        <end position="182"/>
    </location>
</feature>
<evidence type="ECO:0000255" key="1">
    <source>
        <dbReference type="PROSITE-ProRule" id="PRU00490"/>
    </source>
</evidence>
<evidence type="ECO:0000305" key="2"/>